<accession>Q66H71</accession>
<evidence type="ECO:0000250" key="1"/>
<evidence type="ECO:0000250" key="2">
    <source>
        <dbReference type="UniProtKB" id="Q9BRF8"/>
    </source>
</evidence>
<evidence type="ECO:0000305" key="3"/>
<evidence type="ECO:0007744" key="4">
    <source>
    </source>
</evidence>
<sequence>MSAAGAADVFHRARGRTLDAFSSEKEREWTGPFYFVQGADPQFGLMKAWSTGNCDNGGDEWGQEIRLTEQAVEAINKLNPKPKFFVLCGDLVHAMPGTRWRKEQTRDLQRVLKVVDQDIPLVLVSGNHDLGNAPTAETVEEFCQTWGDDYFSFWVGGALFLVLNSQFLYDASKCPALKQAQDHWLDQQLSIAEQQQCQHAIVFQHIPLFLKSIDEDDDYFNLTKTVRQELADKFTRAGIRAVFSGHYHRNAGGTYQNLDMVVSSAIGCQLGKDTHGLRVVVVTAEKIVHRYYSLDELSKRGLDDDLRELLKE</sequence>
<proteinExistence type="evidence at protein level"/>
<keyword id="KW-0963">Cytoplasm</keyword>
<keyword id="KW-0378">Hydrolase</keyword>
<keyword id="KW-0479">Metal-binding</keyword>
<keyword id="KW-0597">Phosphoprotein</keyword>
<keyword id="KW-1185">Reference proteome</keyword>
<reference key="1">
    <citation type="journal article" date="2004" name="Genome Res.">
        <title>The status, quality, and expansion of the NIH full-length cDNA project: the Mammalian Gene Collection (MGC).</title>
        <authorList>
            <consortium name="The MGC Project Team"/>
        </authorList>
    </citation>
    <scope>NUCLEOTIDE SEQUENCE [LARGE SCALE MRNA]</scope>
    <source>
        <tissue>Kidney</tissue>
    </source>
</reference>
<reference key="2">
    <citation type="journal article" date="2012" name="Nat. Commun.">
        <title>Quantitative maps of protein phosphorylation sites across 14 different rat organs and tissues.</title>
        <authorList>
            <person name="Lundby A."/>
            <person name="Secher A."/>
            <person name="Lage K."/>
            <person name="Nordsborg N.B."/>
            <person name="Dmytriyev A."/>
            <person name="Lundby C."/>
            <person name="Olsen J.V."/>
        </authorList>
    </citation>
    <scope>PHOSPHORYLATION [LARGE SCALE ANALYSIS] AT SER-2</scope>
    <scope>IDENTIFICATION BY MASS SPECTROMETRY [LARGE SCALE ANALYSIS]</scope>
</reference>
<feature type="chain" id="PRO_0000320559" description="Serine/threonine-protein phosphatase CPPED1">
    <location>
        <begin position="1"/>
        <end position="312"/>
    </location>
</feature>
<feature type="region of interest" description="Catalytic" evidence="1">
    <location>
        <begin position="47"/>
        <end position="250"/>
    </location>
</feature>
<feature type="binding site" evidence="1">
    <location>
        <position position="90"/>
    </location>
    <ligand>
        <name>a divalent metal cation</name>
        <dbReference type="ChEBI" id="CHEBI:60240"/>
        <label>1</label>
    </ligand>
</feature>
<feature type="binding site" evidence="1">
    <location>
        <position position="90"/>
    </location>
    <ligand>
        <name>a divalent metal cation</name>
        <dbReference type="ChEBI" id="CHEBI:60240"/>
        <label>2</label>
    </ligand>
</feature>
<feature type="binding site" evidence="1">
    <location>
        <position position="127"/>
    </location>
    <ligand>
        <name>a divalent metal cation</name>
        <dbReference type="ChEBI" id="CHEBI:60240"/>
        <label>2</label>
    </ligand>
</feature>
<feature type="binding site" evidence="1">
    <location>
        <position position="246"/>
    </location>
    <ligand>
        <name>a divalent metal cation</name>
        <dbReference type="ChEBI" id="CHEBI:60240"/>
        <label>2</label>
    </ligand>
</feature>
<feature type="modified residue" description="Phosphoserine" evidence="4">
    <location>
        <position position="2"/>
    </location>
</feature>
<feature type="modified residue" description="Phosphoserine" evidence="2">
    <location>
        <position position="293"/>
    </location>
</feature>
<dbReference type="EC" id="3.1.3.16"/>
<dbReference type="EMBL" id="BC081991">
    <property type="protein sequence ID" value="AAH81991.1"/>
    <property type="molecule type" value="mRNA"/>
</dbReference>
<dbReference type="RefSeq" id="NP_001013985.1">
    <property type="nucleotide sequence ID" value="NM_001013963.1"/>
</dbReference>
<dbReference type="SMR" id="Q66H71"/>
<dbReference type="FunCoup" id="Q66H71">
    <property type="interactions" value="419"/>
</dbReference>
<dbReference type="STRING" id="10116.ENSRNOP00000051045"/>
<dbReference type="iPTMnet" id="Q66H71"/>
<dbReference type="PhosphoSitePlus" id="Q66H71"/>
<dbReference type="PaxDb" id="10116-ENSRNOP00000051045"/>
<dbReference type="Ensembl" id="ENSRNOT00000045047.4">
    <property type="protein sequence ID" value="ENSRNOP00000051045.3"/>
    <property type="gene ID" value="ENSRNOG00000015118.7"/>
</dbReference>
<dbReference type="GeneID" id="302890"/>
<dbReference type="KEGG" id="rno:302890"/>
<dbReference type="UCSC" id="RGD:1306568">
    <property type="organism name" value="rat"/>
</dbReference>
<dbReference type="AGR" id="RGD:1306568"/>
<dbReference type="CTD" id="55313"/>
<dbReference type="RGD" id="1306568">
    <property type="gene designation" value="Cpped1"/>
</dbReference>
<dbReference type="eggNOG" id="KOG1378">
    <property type="taxonomic scope" value="Eukaryota"/>
</dbReference>
<dbReference type="GeneTree" id="ENSGT00390000008676"/>
<dbReference type="HOGENOM" id="CLU_077151_0_0_1"/>
<dbReference type="InParanoid" id="Q66H71"/>
<dbReference type="OMA" id="NEPTHET"/>
<dbReference type="OrthoDB" id="5688at9989"/>
<dbReference type="PhylomeDB" id="Q66H71"/>
<dbReference type="TreeFam" id="TF329406"/>
<dbReference type="Reactome" id="R-RNO-6798695">
    <property type="pathway name" value="Neutrophil degranulation"/>
</dbReference>
<dbReference type="PRO" id="PR:Q66H71"/>
<dbReference type="Proteomes" id="UP000002494">
    <property type="component" value="Chromosome 10"/>
</dbReference>
<dbReference type="Bgee" id="ENSRNOG00000015118">
    <property type="expression patterns" value="Expressed in duodenum and 19 other cell types or tissues"/>
</dbReference>
<dbReference type="GO" id="GO:0005737">
    <property type="term" value="C:cytoplasm"/>
    <property type="evidence" value="ECO:0007669"/>
    <property type="project" value="UniProtKB-SubCell"/>
</dbReference>
<dbReference type="GO" id="GO:0046872">
    <property type="term" value="F:metal ion binding"/>
    <property type="evidence" value="ECO:0007669"/>
    <property type="project" value="UniProtKB-KW"/>
</dbReference>
<dbReference type="GO" id="GO:0004722">
    <property type="term" value="F:protein serine/threonine phosphatase activity"/>
    <property type="evidence" value="ECO:0007669"/>
    <property type="project" value="UniProtKB-EC"/>
</dbReference>
<dbReference type="CDD" id="cd07395">
    <property type="entry name" value="MPP_CSTP1"/>
    <property type="match status" value="1"/>
</dbReference>
<dbReference type="FunFam" id="3.60.21.10:FF:000063">
    <property type="entry name" value="Calcineurin-like phosphoesterase domain-containing protein 1"/>
    <property type="match status" value="1"/>
</dbReference>
<dbReference type="Gene3D" id="3.60.21.10">
    <property type="match status" value="1"/>
</dbReference>
<dbReference type="InterPro" id="IPR004843">
    <property type="entry name" value="Calcineurin-like_PHP_ApaH"/>
</dbReference>
<dbReference type="InterPro" id="IPR029052">
    <property type="entry name" value="Metallo-depent_PP-like"/>
</dbReference>
<dbReference type="InterPro" id="IPR041867">
    <property type="entry name" value="MPP_CSTP1"/>
</dbReference>
<dbReference type="InterPro" id="IPR051918">
    <property type="entry name" value="STPP_CPPED1"/>
</dbReference>
<dbReference type="PANTHER" id="PTHR43143">
    <property type="entry name" value="METALLOPHOSPHOESTERASE, CALCINEURIN SUPERFAMILY"/>
    <property type="match status" value="1"/>
</dbReference>
<dbReference type="PANTHER" id="PTHR43143:SF1">
    <property type="entry name" value="SERINE_THREONINE-PROTEIN PHOSPHATASE CPPED1"/>
    <property type="match status" value="1"/>
</dbReference>
<dbReference type="Pfam" id="PF00149">
    <property type="entry name" value="Metallophos"/>
    <property type="match status" value="1"/>
</dbReference>
<dbReference type="SUPFAM" id="SSF56300">
    <property type="entry name" value="Metallo-dependent phosphatases"/>
    <property type="match status" value="1"/>
</dbReference>
<name>CPPED_RAT</name>
<comment type="function">
    <text evidence="1">Protein phosphatase that dephosphorylates AKT family kinase specifically at 'Ser-473', blocking cell cycle progression and promoting cell apoptosis. May play an inhibitory role in glucose uptake by adipocytes (By similarity).</text>
</comment>
<comment type="catalytic activity">
    <reaction>
        <text>O-phospho-L-seryl-[protein] + H2O = L-seryl-[protein] + phosphate</text>
        <dbReference type="Rhea" id="RHEA:20629"/>
        <dbReference type="Rhea" id="RHEA-COMP:9863"/>
        <dbReference type="Rhea" id="RHEA-COMP:11604"/>
        <dbReference type="ChEBI" id="CHEBI:15377"/>
        <dbReference type="ChEBI" id="CHEBI:29999"/>
        <dbReference type="ChEBI" id="CHEBI:43474"/>
        <dbReference type="ChEBI" id="CHEBI:83421"/>
        <dbReference type="EC" id="3.1.3.16"/>
    </reaction>
</comment>
<comment type="catalytic activity">
    <reaction>
        <text>O-phospho-L-threonyl-[protein] + H2O = L-threonyl-[protein] + phosphate</text>
        <dbReference type="Rhea" id="RHEA:47004"/>
        <dbReference type="Rhea" id="RHEA-COMP:11060"/>
        <dbReference type="Rhea" id="RHEA-COMP:11605"/>
        <dbReference type="ChEBI" id="CHEBI:15377"/>
        <dbReference type="ChEBI" id="CHEBI:30013"/>
        <dbReference type="ChEBI" id="CHEBI:43474"/>
        <dbReference type="ChEBI" id="CHEBI:61977"/>
        <dbReference type="EC" id="3.1.3.16"/>
    </reaction>
</comment>
<comment type="cofactor">
    <cofactor evidence="1">
        <name>a divalent metal cation</name>
        <dbReference type="ChEBI" id="CHEBI:60240"/>
    </cofactor>
    <text evidence="1">Binds 2 divalent metal cations.</text>
</comment>
<comment type="subcellular location">
    <subcellularLocation>
        <location evidence="1">Cytoplasm</location>
    </subcellularLocation>
</comment>
<comment type="similarity">
    <text evidence="3">Belongs to the metallophosphoesterase superfamily. CPPED1 family.</text>
</comment>
<gene>
    <name type="primary">Cpped1</name>
    <name type="synonym">Cstp1</name>
</gene>
<protein>
    <recommendedName>
        <fullName>Serine/threonine-protein phosphatase CPPED1</fullName>
        <ecNumber>3.1.3.16</ecNumber>
    </recommendedName>
    <alternativeName>
        <fullName>Calcineurin-like phosphoesterase domain-containing protein 1</fullName>
    </alternativeName>
</protein>
<organism>
    <name type="scientific">Rattus norvegicus</name>
    <name type="common">Rat</name>
    <dbReference type="NCBI Taxonomy" id="10116"/>
    <lineage>
        <taxon>Eukaryota</taxon>
        <taxon>Metazoa</taxon>
        <taxon>Chordata</taxon>
        <taxon>Craniata</taxon>
        <taxon>Vertebrata</taxon>
        <taxon>Euteleostomi</taxon>
        <taxon>Mammalia</taxon>
        <taxon>Eutheria</taxon>
        <taxon>Euarchontoglires</taxon>
        <taxon>Glires</taxon>
        <taxon>Rodentia</taxon>
        <taxon>Myomorpha</taxon>
        <taxon>Muroidea</taxon>
        <taxon>Muridae</taxon>
        <taxon>Murinae</taxon>
        <taxon>Rattus</taxon>
    </lineage>
</organism>